<reference key="1">
    <citation type="journal article" date="2009" name="Nature">
        <title>Evolution of pathogenicity and sexual reproduction in eight Candida genomes.</title>
        <authorList>
            <person name="Butler G."/>
            <person name="Rasmussen M.D."/>
            <person name="Lin M.F."/>
            <person name="Santos M.A.S."/>
            <person name="Sakthikumar S."/>
            <person name="Munro C.A."/>
            <person name="Rheinbay E."/>
            <person name="Grabherr M."/>
            <person name="Forche A."/>
            <person name="Reedy J.L."/>
            <person name="Agrafioti I."/>
            <person name="Arnaud M.B."/>
            <person name="Bates S."/>
            <person name="Brown A.J.P."/>
            <person name="Brunke S."/>
            <person name="Costanzo M.C."/>
            <person name="Fitzpatrick D.A."/>
            <person name="de Groot P.W.J."/>
            <person name="Harris D."/>
            <person name="Hoyer L.L."/>
            <person name="Hube B."/>
            <person name="Klis F.M."/>
            <person name="Kodira C."/>
            <person name="Lennard N."/>
            <person name="Logue M.E."/>
            <person name="Martin R."/>
            <person name="Neiman A.M."/>
            <person name="Nikolaou E."/>
            <person name="Quail M.A."/>
            <person name="Quinn J."/>
            <person name="Santos M.C."/>
            <person name="Schmitzberger F.F."/>
            <person name="Sherlock G."/>
            <person name="Shah P."/>
            <person name="Silverstein K.A.T."/>
            <person name="Skrzypek M.S."/>
            <person name="Soll D."/>
            <person name="Staggs R."/>
            <person name="Stansfield I."/>
            <person name="Stumpf M.P.H."/>
            <person name="Sudbery P.E."/>
            <person name="Srikantha T."/>
            <person name="Zeng Q."/>
            <person name="Berman J."/>
            <person name="Berriman M."/>
            <person name="Heitman J."/>
            <person name="Gow N.A.R."/>
            <person name="Lorenz M.C."/>
            <person name="Birren B.W."/>
            <person name="Kellis M."/>
            <person name="Cuomo C.A."/>
        </authorList>
    </citation>
    <scope>NUCLEOTIDE SEQUENCE [LARGE SCALE GENOMIC DNA]</scope>
    <source>
        <strain>ATCC 11503 / BCRC 21390 / CBS 2605 / JCM 1781 / NBRC 1676 / NRRL YB-4239</strain>
    </source>
</reference>
<gene>
    <name type="primary">IML2</name>
    <name type="ORF">LELG_03620</name>
</gene>
<dbReference type="EMBL" id="CH981527">
    <property type="protein sequence ID" value="EDK45441.1"/>
    <property type="molecule type" value="Genomic_DNA"/>
</dbReference>
<dbReference type="RefSeq" id="XP_001525692.1">
    <property type="nucleotide sequence ID" value="XM_001525642.1"/>
</dbReference>
<dbReference type="SMR" id="A5E1Y3"/>
<dbReference type="FunCoup" id="A5E1Y3">
    <property type="interactions" value="121"/>
</dbReference>
<dbReference type="GeneID" id="5232580"/>
<dbReference type="KEGG" id="lel:PVL30_003104"/>
<dbReference type="VEuPathDB" id="FungiDB:LELG_03620"/>
<dbReference type="eggNOG" id="KOG3783">
    <property type="taxonomic scope" value="Eukaryota"/>
</dbReference>
<dbReference type="HOGENOM" id="CLU_014926_0_0_1"/>
<dbReference type="InParanoid" id="A5E1Y3"/>
<dbReference type="OMA" id="WNGYNRM"/>
<dbReference type="OrthoDB" id="2154985at2759"/>
<dbReference type="Proteomes" id="UP000001996">
    <property type="component" value="Unassembled WGS sequence"/>
</dbReference>
<dbReference type="GO" id="GO:0005829">
    <property type="term" value="C:cytosol"/>
    <property type="evidence" value="ECO:0007669"/>
    <property type="project" value="TreeGrafter"/>
</dbReference>
<dbReference type="GO" id="GO:0005741">
    <property type="term" value="C:mitochondrial outer membrane"/>
    <property type="evidence" value="ECO:0007669"/>
    <property type="project" value="TreeGrafter"/>
</dbReference>
<dbReference type="GO" id="GO:0005634">
    <property type="term" value="C:nucleus"/>
    <property type="evidence" value="ECO:0007669"/>
    <property type="project" value="UniProtKB-SubCell"/>
</dbReference>
<dbReference type="InterPro" id="IPR019412">
    <property type="entry name" value="Iml2/TPR_39"/>
</dbReference>
<dbReference type="InterPro" id="IPR011990">
    <property type="entry name" value="TPR-like_helical_dom_sf"/>
</dbReference>
<dbReference type="PANTHER" id="PTHR31859">
    <property type="entry name" value="TETRATRICOPEPTIDE REPEAT PROTEIN 39 FAMILY MEMBER"/>
    <property type="match status" value="1"/>
</dbReference>
<dbReference type="PANTHER" id="PTHR31859:SF1">
    <property type="entry name" value="TETRATRICOPEPTIDE REPEAT PROTEIN 39C"/>
    <property type="match status" value="1"/>
</dbReference>
<dbReference type="Pfam" id="PF10300">
    <property type="entry name" value="Iml2-TPR_39"/>
    <property type="match status" value="1"/>
</dbReference>
<dbReference type="SUPFAM" id="SSF48452">
    <property type="entry name" value="TPR-like"/>
    <property type="match status" value="1"/>
</dbReference>
<proteinExistence type="inferred from homology"/>
<sequence length="905" mass="101238">MFKGIRKRASNLSIYAVTSNLSATNAPSDQQPASNSPSSYESILSQVHDFEIALKAMDYLLDDRTQQGTELLHEQAQLGSSDGKPHAIFPLALGVMEFIEATLGFEPEVMARAHKTLNDAESASTTNAKYNVRHQLATSNIYPPGTEFQVTLAESTLLNALLMLLTENNGMVESVKALYKLRKAYQTLDAVYKKIKELEPVFNRNLAKLRKAANKGLLEVPRLNGLVNGGTRLKHSISTVDLPGYESLGSSSSSSSATLPEDLKLMKNLEKIYLMRKARIEGTNLGNNTGVQHQPLNLFSDLASSIAMKQNGNGVETSLPIIPQYGKFNNGNEEQVEEQEEEGEGEEEEEENSDNEHFVDAVEELTIGDINSSSLADSSAQSILSSVETSPSEVQSTDMHLHVSTTDEFIHSGVQLCFGILQVVLSLIPPAIGKVLSIVGFKGERETGLKLLWKTAITSRNVHGELALLFLLMFYDGPVQFVDTGFRLPSANKLKNIINLENKTSVTDDEVELIKDSPESYTSQLLKRARHHFPHNALWILQEGRMLAAEGRLAQASTLMQNFTDNPNNKIQMQQIEALLIFDRATIYIYMHEYDKAARDLIYLIEINSWSKAVYLFMAAACYLERYRMVRMGLQSPQINADTKLSLNGDVELEAKKYSDLFTKYLNLSLSYVPGHGANAQKKGGLGGSGKQMPFDKFLLRKWKHIEQRKKRHPELSLADVVGTSLIHELIYFWNGYNRMSPQDFELALKLLGYSGAPNTELSANTLHNNYAKIEETEDEAMIRYFLQSVALRQLGKVKQGLGILDSHVISKYVISEVPQFRFHKMTYSPYLYPTAFYEKTMFVWLLRTSESTIKQDVGRAVHECKSYLKKAETVGEGDYELSNRTSMRIKAAGDRLDQLGSLSR</sequence>
<evidence type="ECO:0000250" key="1">
    <source>
        <dbReference type="UniProtKB" id="P47031"/>
    </source>
</evidence>
<evidence type="ECO:0000256" key="2">
    <source>
        <dbReference type="SAM" id="MobiDB-lite"/>
    </source>
</evidence>
<evidence type="ECO:0000305" key="3"/>
<feature type="chain" id="PRO_0000333350" description="Inclusion body clearance protein IML2">
    <location>
        <begin position="1"/>
        <end position="905"/>
    </location>
</feature>
<feature type="region of interest" description="Disordered" evidence="2">
    <location>
        <begin position="325"/>
        <end position="356"/>
    </location>
</feature>
<feature type="compositionally biased region" description="Acidic residues" evidence="2">
    <location>
        <begin position="334"/>
        <end position="353"/>
    </location>
</feature>
<accession>A5E1Y3</accession>
<keyword id="KW-0963">Cytoplasm</keyword>
<keyword id="KW-0539">Nucleus</keyword>
<keyword id="KW-0597">Phosphoprotein</keyword>
<keyword id="KW-1185">Reference proteome</keyword>
<organism>
    <name type="scientific">Lodderomyces elongisporus (strain ATCC 11503 / CBS 2605 / JCM 1781 / NBRC 1676 / NRRL YB-4239)</name>
    <name type="common">Yeast</name>
    <name type="synonym">Saccharomyces elongisporus</name>
    <dbReference type="NCBI Taxonomy" id="379508"/>
    <lineage>
        <taxon>Eukaryota</taxon>
        <taxon>Fungi</taxon>
        <taxon>Dikarya</taxon>
        <taxon>Ascomycota</taxon>
        <taxon>Saccharomycotina</taxon>
        <taxon>Pichiomycetes</taxon>
        <taxon>Debaryomycetaceae</taxon>
        <taxon>Candida/Lodderomyces clade</taxon>
        <taxon>Lodderomyces</taxon>
    </lineage>
</organism>
<protein>
    <recommendedName>
        <fullName>Inclusion body clearance protein IML2</fullName>
    </recommendedName>
</protein>
<name>IML2_LODEL</name>
<comment type="function">
    <text evidence="1">Inclusion body (IB) resident protein that interacts strongly with lipid droplet (LD) proteins. Involved in LD-mediated IB clearing after protein folding stress, probably by enabling access to the IBs of an LD-stored soluble sterol derivative that acts as a chaperone in inclusion clearing.</text>
</comment>
<comment type="subunit">
    <text evidence="1">Interacts with lipid droplet proteins.</text>
</comment>
<comment type="subcellular location">
    <subcellularLocation>
        <location evidence="1">Cytoplasm</location>
    </subcellularLocation>
    <subcellularLocation>
        <location evidence="1">Nucleus</location>
    </subcellularLocation>
    <text evidence="1">Localized exclusively in cytoplasmic inclusion bodies under protein folding stress conditions.</text>
</comment>
<comment type="similarity">
    <text evidence="3">Belongs to the IML2 family.</text>
</comment>